<sequence length="189" mass="21938">MATDVFSSKNLAVQAQKKILGKMASSKYIATSLIDDTSGEVLDELYQLTREYTQSKKESEKVIKNLIKTVIKLAVLYRNNQFNEEEIALMEKFKRKVHQLAMTVVSFYQVEYTFDRNVLSKLLNECRELLHQVIQRHLTAKSHGRVNNVFDHFSNCEFLAALYNPFGPFKQHLQRLCEGVNKMLDEDNI</sequence>
<keyword id="KW-0053">Apoptosis</keyword>
<keyword id="KW-0963">Cytoplasm</keyword>
<keyword id="KW-1185">Reference proteome</keyword>
<organism>
    <name type="scientific">Xenopus tropicalis</name>
    <name type="common">Western clawed frog</name>
    <name type="synonym">Silurana tropicalis</name>
    <dbReference type="NCBI Taxonomy" id="8364"/>
    <lineage>
        <taxon>Eukaryota</taxon>
        <taxon>Metazoa</taxon>
        <taxon>Chordata</taxon>
        <taxon>Craniata</taxon>
        <taxon>Vertebrata</taxon>
        <taxon>Euteleostomi</taxon>
        <taxon>Amphibia</taxon>
        <taxon>Batrachia</taxon>
        <taxon>Anura</taxon>
        <taxon>Pipoidea</taxon>
        <taxon>Pipidae</taxon>
        <taxon>Xenopodinae</taxon>
        <taxon>Xenopus</taxon>
        <taxon>Silurana</taxon>
    </lineage>
</organism>
<feature type="chain" id="PRO_0000285723" description="Tumor necrosis factor alpha-induced protein 8">
    <location>
        <begin position="1"/>
        <end position="189"/>
    </location>
</feature>
<reference key="1">
    <citation type="submission" date="2006-10" db="EMBL/GenBank/DDBJ databases">
        <authorList>
            <consortium name="Sanger Xenopus tropicalis EST/cDNA project"/>
        </authorList>
    </citation>
    <scope>NUCLEOTIDE SEQUENCE [LARGE SCALE MRNA]</scope>
    <source>
        <tissue>Egg</tissue>
    </source>
</reference>
<name>TFIP8_XENTR</name>
<dbReference type="EMBL" id="CR760636">
    <property type="protein sequence ID" value="CAJ81748.1"/>
    <property type="molecule type" value="mRNA"/>
</dbReference>
<dbReference type="RefSeq" id="NP_001017184.1">
    <property type="nucleotide sequence ID" value="NM_001017184.2"/>
</dbReference>
<dbReference type="SMR" id="Q28I19"/>
<dbReference type="FunCoup" id="Q28I19">
    <property type="interactions" value="1863"/>
</dbReference>
<dbReference type="PaxDb" id="8364-ENSXETP00000038128"/>
<dbReference type="GeneID" id="549938"/>
<dbReference type="KEGG" id="xtr:549938"/>
<dbReference type="AGR" id="Xenbase:XB-GENE-941174"/>
<dbReference type="CTD" id="25816"/>
<dbReference type="Xenbase" id="XB-GENE-941174">
    <property type="gene designation" value="tnfaip8"/>
</dbReference>
<dbReference type="eggNOG" id="ENOG502S00N">
    <property type="taxonomic scope" value="Eukaryota"/>
</dbReference>
<dbReference type="InParanoid" id="Q28I19"/>
<dbReference type="OrthoDB" id="10055976at2759"/>
<dbReference type="Reactome" id="R-XTR-1483255">
    <property type="pathway name" value="PI Metabolism"/>
</dbReference>
<dbReference type="Proteomes" id="UP000008143">
    <property type="component" value="Chromosome 1"/>
</dbReference>
<dbReference type="Bgee" id="ENSXETG00000017562">
    <property type="expression patterns" value="Expressed in egg cell and 13 other cell types or tissues"/>
</dbReference>
<dbReference type="GO" id="GO:0005737">
    <property type="term" value="C:cytoplasm"/>
    <property type="evidence" value="ECO:0000250"/>
    <property type="project" value="UniProtKB"/>
</dbReference>
<dbReference type="GO" id="GO:0043027">
    <property type="term" value="F:cysteine-type endopeptidase inhibitor activity involved in apoptotic process"/>
    <property type="evidence" value="ECO:0000250"/>
    <property type="project" value="UniProtKB"/>
</dbReference>
<dbReference type="GO" id="GO:0006915">
    <property type="term" value="P:apoptotic process"/>
    <property type="evidence" value="ECO:0007669"/>
    <property type="project" value="UniProtKB-KW"/>
</dbReference>
<dbReference type="GO" id="GO:0043065">
    <property type="term" value="P:positive regulation of apoptotic process"/>
    <property type="evidence" value="ECO:0000250"/>
    <property type="project" value="UniProtKB"/>
</dbReference>
<dbReference type="FunFam" id="1.20.1440.160:FF:000001">
    <property type="entry name" value="Tumor necrosis factor alpha-induced protein 8-like 1"/>
    <property type="match status" value="1"/>
</dbReference>
<dbReference type="Gene3D" id="1.20.1440.160">
    <property type="entry name" value="Tumor necrosis factor alpha-induced protein 8-like"/>
    <property type="match status" value="1"/>
</dbReference>
<dbReference type="InterPro" id="IPR008477">
    <property type="entry name" value="TNFAIP8-like"/>
</dbReference>
<dbReference type="InterPro" id="IPR038355">
    <property type="entry name" value="TNFAIP8_sf"/>
</dbReference>
<dbReference type="PANTHER" id="PTHR12757:SF3">
    <property type="entry name" value="TUMOR NECROSIS FACTOR ALPHA-INDUCED PROTEIN 8"/>
    <property type="match status" value="1"/>
</dbReference>
<dbReference type="PANTHER" id="PTHR12757">
    <property type="entry name" value="TUMOR NECROSIS FACTOR INDUCED PROTEIN"/>
    <property type="match status" value="1"/>
</dbReference>
<dbReference type="Pfam" id="PF05527">
    <property type="entry name" value="DUF758"/>
    <property type="match status" value="1"/>
</dbReference>
<proteinExistence type="evidence at transcript level"/>
<evidence type="ECO:0000250" key="1"/>
<evidence type="ECO:0000305" key="2"/>
<comment type="function">
    <text evidence="1">Acts as a negative mediator of apoptosis.</text>
</comment>
<comment type="subcellular location">
    <subcellularLocation>
        <location evidence="1">Cytoplasm</location>
    </subcellularLocation>
</comment>
<comment type="similarity">
    <text evidence="2">Belongs to the TNFAIP8 family.</text>
</comment>
<protein>
    <recommendedName>
        <fullName>Tumor necrosis factor alpha-induced protein 8</fullName>
        <shortName>TNF alpha-induced protein 8</shortName>
    </recommendedName>
</protein>
<gene>
    <name type="primary">tnfaip8</name>
    <name type="ORF">TEgg053o08.1</name>
</gene>
<accession>Q28I19</accession>